<feature type="chain" id="PRO_0000049695" description="Uncharacterized protein YphB">
    <location>
        <begin position="1"/>
        <end position="297"/>
    </location>
</feature>
<feature type="transmembrane region" description="Helical" evidence="1">
    <location>
        <begin position="3"/>
        <end position="23"/>
    </location>
</feature>
<feature type="transmembrane region" description="Helical" evidence="1">
    <location>
        <begin position="38"/>
        <end position="58"/>
    </location>
</feature>
<feature type="transmembrane region" description="Helical" evidence="1">
    <location>
        <begin position="103"/>
        <end position="123"/>
    </location>
</feature>
<feature type="transmembrane region" description="Helical" evidence="1">
    <location>
        <begin position="128"/>
        <end position="148"/>
    </location>
</feature>
<keyword id="KW-1003">Cell membrane</keyword>
<keyword id="KW-0472">Membrane</keyword>
<keyword id="KW-1185">Reference proteome</keyword>
<keyword id="KW-0812">Transmembrane</keyword>
<keyword id="KW-1133">Transmembrane helix</keyword>
<sequence length="297" mass="32932">MSDYIYPIIAGVIAGIATRLYMLKTDYRQYPTYVHGKVIHIALGLIAAGLGAIIMPALLQEEFTAITFLTLAATQFRDVRNMERNTLTQMDSYELVSRGSTYIEGIAIAFESRNYIVIFTALLTTSAYVFLSIWAAVIAAVVCFLLAMKFMSGSVLKDIVDIEYIKPRFDGPGLFVDNIYMMNIGLPEKQELILKHGMGFILTPKNFNSAATIANLGQRQAILFDVSNVLGVYRDSGEPSLTPIAKRDLNDGRVAVFVLPQIHHPETAVQIISNVPTLENAIRMPTEFIKNQDKVIG</sequence>
<organism>
    <name type="scientific">Bacillus subtilis (strain 168)</name>
    <dbReference type="NCBI Taxonomy" id="224308"/>
    <lineage>
        <taxon>Bacteria</taxon>
        <taxon>Bacillati</taxon>
        <taxon>Bacillota</taxon>
        <taxon>Bacilli</taxon>
        <taxon>Bacillales</taxon>
        <taxon>Bacillaceae</taxon>
        <taxon>Bacillus</taxon>
    </lineage>
</organism>
<name>YPHB_BACSU</name>
<evidence type="ECO:0000255" key="1"/>
<evidence type="ECO:0000305" key="2"/>
<reference key="1">
    <citation type="journal article" date="1996" name="Microbiology">
        <title>Sequence analysis of the Bacillus subtilis chromosome region between the serA and kdg loci cloned in a yeast artificial chromosome.</title>
        <authorList>
            <person name="Sorokin A.V."/>
            <person name="Azevedo V."/>
            <person name="Zumstein E."/>
            <person name="Galleron N."/>
            <person name="Ehrlich S.D."/>
            <person name="Serror P."/>
        </authorList>
    </citation>
    <scope>NUCLEOTIDE SEQUENCE [GENOMIC DNA]</scope>
    <source>
        <strain>168 / Marburg / ATCC 6051 / DSM 10 / JCM 1465 / NBRC 13719 / NCIMB 3610 / NRRL NRS-744 / VKM B-501</strain>
    </source>
</reference>
<reference key="2">
    <citation type="journal article" date="1997" name="Nature">
        <title>The complete genome sequence of the Gram-positive bacterium Bacillus subtilis.</title>
        <authorList>
            <person name="Kunst F."/>
            <person name="Ogasawara N."/>
            <person name="Moszer I."/>
            <person name="Albertini A.M."/>
            <person name="Alloni G."/>
            <person name="Azevedo V."/>
            <person name="Bertero M.G."/>
            <person name="Bessieres P."/>
            <person name="Bolotin A."/>
            <person name="Borchert S."/>
            <person name="Borriss R."/>
            <person name="Boursier L."/>
            <person name="Brans A."/>
            <person name="Braun M."/>
            <person name="Brignell S.C."/>
            <person name="Bron S."/>
            <person name="Brouillet S."/>
            <person name="Bruschi C.V."/>
            <person name="Caldwell B."/>
            <person name="Capuano V."/>
            <person name="Carter N.M."/>
            <person name="Choi S.-K."/>
            <person name="Codani J.-J."/>
            <person name="Connerton I.F."/>
            <person name="Cummings N.J."/>
            <person name="Daniel R.A."/>
            <person name="Denizot F."/>
            <person name="Devine K.M."/>
            <person name="Duesterhoeft A."/>
            <person name="Ehrlich S.D."/>
            <person name="Emmerson P.T."/>
            <person name="Entian K.-D."/>
            <person name="Errington J."/>
            <person name="Fabret C."/>
            <person name="Ferrari E."/>
            <person name="Foulger D."/>
            <person name="Fritz C."/>
            <person name="Fujita M."/>
            <person name="Fujita Y."/>
            <person name="Fuma S."/>
            <person name="Galizzi A."/>
            <person name="Galleron N."/>
            <person name="Ghim S.-Y."/>
            <person name="Glaser P."/>
            <person name="Goffeau A."/>
            <person name="Golightly E.J."/>
            <person name="Grandi G."/>
            <person name="Guiseppi G."/>
            <person name="Guy B.J."/>
            <person name="Haga K."/>
            <person name="Haiech J."/>
            <person name="Harwood C.R."/>
            <person name="Henaut A."/>
            <person name="Hilbert H."/>
            <person name="Holsappel S."/>
            <person name="Hosono S."/>
            <person name="Hullo M.-F."/>
            <person name="Itaya M."/>
            <person name="Jones L.-M."/>
            <person name="Joris B."/>
            <person name="Karamata D."/>
            <person name="Kasahara Y."/>
            <person name="Klaerr-Blanchard M."/>
            <person name="Klein C."/>
            <person name="Kobayashi Y."/>
            <person name="Koetter P."/>
            <person name="Koningstein G."/>
            <person name="Krogh S."/>
            <person name="Kumano M."/>
            <person name="Kurita K."/>
            <person name="Lapidus A."/>
            <person name="Lardinois S."/>
            <person name="Lauber J."/>
            <person name="Lazarevic V."/>
            <person name="Lee S.-M."/>
            <person name="Levine A."/>
            <person name="Liu H."/>
            <person name="Masuda S."/>
            <person name="Mauel C."/>
            <person name="Medigue C."/>
            <person name="Medina N."/>
            <person name="Mellado R.P."/>
            <person name="Mizuno M."/>
            <person name="Moestl D."/>
            <person name="Nakai S."/>
            <person name="Noback M."/>
            <person name="Noone D."/>
            <person name="O'Reilly M."/>
            <person name="Ogawa K."/>
            <person name="Ogiwara A."/>
            <person name="Oudega B."/>
            <person name="Park S.-H."/>
            <person name="Parro V."/>
            <person name="Pohl T.M."/>
            <person name="Portetelle D."/>
            <person name="Porwollik S."/>
            <person name="Prescott A.M."/>
            <person name="Presecan E."/>
            <person name="Pujic P."/>
            <person name="Purnelle B."/>
            <person name="Rapoport G."/>
            <person name="Rey M."/>
            <person name="Reynolds S."/>
            <person name="Rieger M."/>
            <person name="Rivolta C."/>
            <person name="Rocha E."/>
            <person name="Roche B."/>
            <person name="Rose M."/>
            <person name="Sadaie Y."/>
            <person name="Sato T."/>
            <person name="Scanlan E."/>
            <person name="Schleich S."/>
            <person name="Schroeter R."/>
            <person name="Scoffone F."/>
            <person name="Sekiguchi J."/>
            <person name="Sekowska A."/>
            <person name="Seror S.J."/>
            <person name="Serror P."/>
            <person name="Shin B.-S."/>
            <person name="Soldo B."/>
            <person name="Sorokin A."/>
            <person name="Tacconi E."/>
            <person name="Takagi T."/>
            <person name="Takahashi H."/>
            <person name="Takemaru K."/>
            <person name="Takeuchi M."/>
            <person name="Tamakoshi A."/>
            <person name="Tanaka T."/>
            <person name="Terpstra P."/>
            <person name="Tognoni A."/>
            <person name="Tosato V."/>
            <person name="Uchiyama S."/>
            <person name="Vandenbol M."/>
            <person name="Vannier F."/>
            <person name="Vassarotti A."/>
            <person name="Viari A."/>
            <person name="Wambutt R."/>
            <person name="Wedler E."/>
            <person name="Wedler H."/>
            <person name="Weitzenegger T."/>
            <person name="Winters P."/>
            <person name="Wipat A."/>
            <person name="Yamamoto H."/>
            <person name="Yamane K."/>
            <person name="Yasumoto K."/>
            <person name="Yata K."/>
            <person name="Yoshida K."/>
            <person name="Yoshikawa H.-F."/>
            <person name="Zumstein E."/>
            <person name="Yoshikawa H."/>
            <person name="Danchin A."/>
        </authorList>
    </citation>
    <scope>NUCLEOTIDE SEQUENCE [LARGE SCALE GENOMIC DNA]</scope>
    <source>
        <strain>168</strain>
    </source>
</reference>
<dbReference type="EMBL" id="L47648">
    <property type="protein sequence ID" value="AAC83965.1"/>
    <property type="molecule type" value="Genomic_DNA"/>
</dbReference>
<dbReference type="EMBL" id="AL009126">
    <property type="protein sequence ID" value="CAB14201.1"/>
    <property type="molecule type" value="Genomic_DNA"/>
</dbReference>
<dbReference type="PIR" id="H69935">
    <property type="entry name" value="H69935"/>
</dbReference>
<dbReference type="RefSeq" id="NP_390166.1">
    <property type="nucleotide sequence ID" value="NC_000964.3"/>
</dbReference>
<dbReference type="RefSeq" id="WP_003230562.1">
    <property type="nucleotide sequence ID" value="NZ_OZ025638.1"/>
</dbReference>
<dbReference type="SMR" id="P50742"/>
<dbReference type="FunCoup" id="P50742">
    <property type="interactions" value="71"/>
</dbReference>
<dbReference type="STRING" id="224308.BSU22850"/>
<dbReference type="PaxDb" id="224308-BSU22850"/>
<dbReference type="EnsemblBacteria" id="CAB14201">
    <property type="protein sequence ID" value="CAB14201"/>
    <property type="gene ID" value="BSU_22850"/>
</dbReference>
<dbReference type="GeneID" id="938990"/>
<dbReference type="KEGG" id="bsu:BSU22850"/>
<dbReference type="eggNOG" id="ENOG502Z8EA">
    <property type="taxonomic scope" value="Bacteria"/>
</dbReference>
<dbReference type="InParanoid" id="P50742"/>
<dbReference type="OrthoDB" id="1846546at2"/>
<dbReference type="PhylomeDB" id="P50742"/>
<dbReference type="BioCyc" id="BSUB:BSU22850-MONOMER"/>
<dbReference type="Proteomes" id="UP000001570">
    <property type="component" value="Chromosome"/>
</dbReference>
<dbReference type="GO" id="GO:0005886">
    <property type="term" value="C:plasma membrane"/>
    <property type="evidence" value="ECO:0007669"/>
    <property type="project" value="UniProtKB-SubCell"/>
</dbReference>
<dbReference type="InterPro" id="IPR025918">
    <property type="entry name" value="YIEGIA"/>
</dbReference>
<dbReference type="Pfam" id="PF14045">
    <property type="entry name" value="YIEGIA"/>
    <property type="match status" value="1"/>
</dbReference>
<accession>P50742</accession>
<proteinExistence type="predicted"/>
<gene>
    <name type="primary">yphB</name>
    <name type="ordered locus">BSU22850</name>
</gene>
<comment type="subcellular location">
    <subcellularLocation>
        <location evidence="2">Cell membrane</location>
        <topology evidence="2">Multi-pass membrane protein</topology>
    </subcellularLocation>
</comment>
<protein>
    <recommendedName>
        <fullName>Uncharacterized protein YphB</fullName>
    </recommendedName>
</protein>